<name>PYRC_HELPG</name>
<organism>
    <name type="scientific">Helicobacter pylori (strain G27)</name>
    <dbReference type="NCBI Taxonomy" id="563041"/>
    <lineage>
        <taxon>Bacteria</taxon>
        <taxon>Pseudomonadati</taxon>
        <taxon>Campylobacterota</taxon>
        <taxon>Epsilonproteobacteria</taxon>
        <taxon>Campylobacterales</taxon>
        <taxon>Helicobacteraceae</taxon>
        <taxon>Helicobacter</taxon>
    </lineage>
</organism>
<keyword id="KW-0378">Hydrolase</keyword>
<keyword id="KW-0479">Metal-binding</keyword>
<keyword id="KW-0665">Pyrimidine biosynthesis</keyword>
<keyword id="KW-1185">Reference proteome</keyword>
<keyword id="KW-0862">Zinc</keyword>
<proteinExistence type="inferred from homology"/>
<evidence type="ECO:0000255" key="1">
    <source>
        <dbReference type="HAMAP-Rule" id="MF_00219"/>
    </source>
</evidence>
<accession>B5Z6V2</accession>
<gene>
    <name evidence="1" type="primary">pyrC</name>
    <name type="ordered locus">HPG27_540</name>
</gene>
<dbReference type="EC" id="3.5.2.3" evidence="1"/>
<dbReference type="EMBL" id="CP001173">
    <property type="protein sequence ID" value="ACI27301.1"/>
    <property type="molecule type" value="Genomic_DNA"/>
</dbReference>
<dbReference type="RefSeq" id="WP_000406655.1">
    <property type="nucleotide sequence ID" value="NC_011333.1"/>
</dbReference>
<dbReference type="SMR" id="B5Z6V2"/>
<dbReference type="KEGG" id="hpg:HPG27_540"/>
<dbReference type="HOGENOM" id="CLU_041558_0_0_7"/>
<dbReference type="UniPathway" id="UPA00070">
    <property type="reaction ID" value="UER00117"/>
</dbReference>
<dbReference type="Proteomes" id="UP000001735">
    <property type="component" value="Chromosome"/>
</dbReference>
<dbReference type="GO" id="GO:0005829">
    <property type="term" value="C:cytosol"/>
    <property type="evidence" value="ECO:0007669"/>
    <property type="project" value="TreeGrafter"/>
</dbReference>
<dbReference type="GO" id="GO:0004151">
    <property type="term" value="F:dihydroorotase activity"/>
    <property type="evidence" value="ECO:0007669"/>
    <property type="project" value="UniProtKB-UniRule"/>
</dbReference>
<dbReference type="GO" id="GO:0008270">
    <property type="term" value="F:zinc ion binding"/>
    <property type="evidence" value="ECO:0007669"/>
    <property type="project" value="UniProtKB-UniRule"/>
</dbReference>
<dbReference type="GO" id="GO:0006207">
    <property type="term" value="P:'de novo' pyrimidine nucleobase biosynthetic process"/>
    <property type="evidence" value="ECO:0007669"/>
    <property type="project" value="TreeGrafter"/>
</dbReference>
<dbReference type="GO" id="GO:0044205">
    <property type="term" value="P:'de novo' UMP biosynthetic process"/>
    <property type="evidence" value="ECO:0007669"/>
    <property type="project" value="UniProtKB-UniRule"/>
</dbReference>
<dbReference type="CDD" id="cd01294">
    <property type="entry name" value="DHOase"/>
    <property type="match status" value="1"/>
</dbReference>
<dbReference type="FunFam" id="3.20.20.140:FF:000110">
    <property type="entry name" value="Dihydroorotase"/>
    <property type="match status" value="1"/>
</dbReference>
<dbReference type="Gene3D" id="3.20.20.140">
    <property type="entry name" value="Metal-dependent hydrolases"/>
    <property type="match status" value="1"/>
</dbReference>
<dbReference type="HAMAP" id="MF_00219">
    <property type="entry name" value="PyrC_classII"/>
    <property type="match status" value="1"/>
</dbReference>
<dbReference type="InterPro" id="IPR004721">
    <property type="entry name" value="DHOdimr"/>
</dbReference>
<dbReference type="InterPro" id="IPR002195">
    <property type="entry name" value="Dihydroorotase_CS"/>
</dbReference>
<dbReference type="InterPro" id="IPR032466">
    <property type="entry name" value="Metal_Hydrolase"/>
</dbReference>
<dbReference type="NCBIfam" id="TIGR00856">
    <property type="entry name" value="pyrC_dimer"/>
    <property type="match status" value="1"/>
</dbReference>
<dbReference type="PANTHER" id="PTHR43137">
    <property type="entry name" value="DIHYDROOROTASE"/>
    <property type="match status" value="1"/>
</dbReference>
<dbReference type="PANTHER" id="PTHR43137:SF1">
    <property type="entry name" value="DIHYDROOROTASE"/>
    <property type="match status" value="1"/>
</dbReference>
<dbReference type="PIRSF" id="PIRSF001237">
    <property type="entry name" value="DHOdimr"/>
    <property type="match status" value="1"/>
</dbReference>
<dbReference type="SUPFAM" id="SSF51556">
    <property type="entry name" value="Metallo-dependent hydrolases"/>
    <property type="match status" value="1"/>
</dbReference>
<dbReference type="PROSITE" id="PS00483">
    <property type="entry name" value="DIHYDROOROTASE_2"/>
    <property type="match status" value="1"/>
</dbReference>
<comment type="function">
    <text evidence="1">Catalyzes the reversible cyclization of carbamoyl aspartate to dihydroorotate.</text>
</comment>
<comment type="catalytic activity">
    <reaction evidence="1">
        <text>(S)-dihydroorotate + H2O = N-carbamoyl-L-aspartate + H(+)</text>
        <dbReference type="Rhea" id="RHEA:24296"/>
        <dbReference type="ChEBI" id="CHEBI:15377"/>
        <dbReference type="ChEBI" id="CHEBI:15378"/>
        <dbReference type="ChEBI" id="CHEBI:30864"/>
        <dbReference type="ChEBI" id="CHEBI:32814"/>
        <dbReference type="EC" id="3.5.2.3"/>
    </reaction>
</comment>
<comment type="cofactor">
    <cofactor evidence="1">
        <name>Zn(2+)</name>
        <dbReference type="ChEBI" id="CHEBI:29105"/>
    </cofactor>
    <text evidence="1">Binds 2 Zn(2+) ions per subunit.</text>
</comment>
<comment type="pathway">
    <text evidence="1">Pyrimidine metabolism; UMP biosynthesis via de novo pathway; (S)-dihydroorotate from bicarbonate: step 3/3.</text>
</comment>
<comment type="subunit">
    <text evidence="1">Homodimer.</text>
</comment>
<comment type="similarity">
    <text evidence="1">Belongs to the metallo-dependent hydrolases superfamily. DHOase family. Class II DHOase subfamily.</text>
</comment>
<feature type="chain" id="PRO_1000100046" description="Dihydroorotase">
    <location>
        <begin position="1"/>
        <end position="339"/>
    </location>
</feature>
<feature type="active site" evidence="1">
    <location>
        <position position="239"/>
    </location>
</feature>
<feature type="binding site" evidence="1">
    <location>
        <position position="12"/>
    </location>
    <ligand>
        <name>Zn(2+)</name>
        <dbReference type="ChEBI" id="CHEBI:29105"/>
        <label>1</label>
    </ligand>
</feature>
<feature type="binding site" evidence="1">
    <location>
        <begin position="14"/>
        <end position="16"/>
    </location>
    <ligand>
        <name>substrate</name>
    </ligand>
</feature>
<feature type="binding site" evidence="1">
    <location>
        <position position="14"/>
    </location>
    <ligand>
        <name>Zn(2+)</name>
        <dbReference type="ChEBI" id="CHEBI:29105"/>
        <label>1</label>
    </ligand>
</feature>
<feature type="binding site" evidence="1">
    <location>
        <position position="40"/>
    </location>
    <ligand>
        <name>substrate</name>
    </ligand>
</feature>
<feature type="binding site" description="via carbamate group" evidence="1">
    <location>
        <position position="94"/>
    </location>
    <ligand>
        <name>Zn(2+)</name>
        <dbReference type="ChEBI" id="CHEBI:29105"/>
        <label>1</label>
    </ligand>
</feature>
<feature type="binding site" description="via carbamate group" evidence="1">
    <location>
        <position position="94"/>
    </location>
    <ligand>
        <name>Zn(2+)</name>
        <dbReference type="ChEBI" id="CHEBI:29105"/>
        <label>2</label>
    </ligand>
</feature>
<feature type="binding site" evidence="1">
    <location>
        <position position="133"/>
    </location>
    <ligand>
        <name>substrate</name>
    </ligand>
</feature>
<feature type="binding site" evidence="1">
    <location>
        <position position="133"/>
    </location>
    <ligand>
        <name>Zn(2+)</name>
        <dbReference type="ChEBI" id="CHEBI:29105"/>
        <label>2</label>
    </ligand>
</feature>
<feature type="binding site" evidence="1">
    <location>
        <position position="167"/>
    </location>
    <ligand>
        <name>Zn(2+)</name>
        <dbReference type="ChEBI" id="CHEBI:29105"/>
        <label>2</label>
    </ligand>
</feature>
<feature type="binding site" evidence="1">
    <location>
        <position position="239"/>
    </location>
    <ligand>
        <name>Zn(2+)</name>
        <dbReference type="ChEBI" id="CHEBI:29105"/>
        <label>1</label>
    </ligand>
</feature>
<feature type="binding site" evidence="1">
    <location>
        <position position="243"/>
    </location>
    <ligand>
        <name>substrate</name>
    </ligand>
</feature>
<feature type="binding site" evidence="1">
    <location>
        <position position="255"/>
    </location>
    <ligand>
        <name>substrate</name>
    </ligand>
</feature>
<feature type="modified residue" description="N6-carboxylysine" evidence="1">
    <location>
        <position position="94"/>
    </location>
</feature>
<sequence length="339" mass="38022">MEITLFDPIDAHLHVREDALLKAVLRYSSEPFSAAVIMPNLSKPLIDTPTTLEYEEEILKNSSNFKPLMSLYFNDGLTLEELQRAQEKGIRFLKLYPKGMTTNAQNGTSDLLGEKTLEILENAQKLGFILCIHAEQAGFCLDKEFLCHSVLETFALSFPKLKIIIEHLSDWRSIALIEKHTNLYATLTLHHISMTLDDLLGGSLNPHCFCKPLIKTKKDQERLLSLALKAHPKISFGSDSAPHFVSKKHSASIPAGIFSAPILLPALCELFEKHNALENLQAFISDNAKKIYTLDNLPNKKARLSKKPFIVPTHTICLNEKIAILRGGETLSWNLQEIA</sequence>
<reference key="1">
    <citation type="journal article" date="2009" name="J. Bacteriol.">
        <title>The complete genome sequence of Helicobacter pylori strain G27.</title>
        <authorList>
            <person name="Baltrus D.A."/>
            <person name="Amieva M.R."/>
            <person name="Covacci A."/>
            <person name="Lowe T.M."/>
            <person name="Merrell D.S."/>
            <person name="Ottemann K.M."/>
            <person name="Stein M."/>
            <person name="Salama N.R."/>
            <person name="Guillemin K."/>
        </authorList>
    </citation>
    <scope>NUCLEOTIDE SEQUENCE [LARGE SCALE GENOMIC DNA]</scope>
    <source>
        <strain>G27</strain>
    </source>
</reference>
<protein>
    <recommendedName>
        <fullName evidence="1">Dihydroorotase</fullName>
        <shortName evidence="1">DHOase</shortName>
        <ecNumber evidence="1">3.5.2.3</ecNumber>
    </recommendedName>
</protein>